<sequence>MFTIDFSDHTGLVKDAWYKQIEDLLEFAKKEEHIEDDAELSVTFVDKQEIQEINRTYRDKDKVTDVISFALEEDEPEIDFSGLDIPRVLGDIIICTDVAQEQANNYGHSFERELGFLALHGFLHLLGYDHMTEADEKEMFGRQDTILNAYGLTRD</sequence>
<evidence type="ECO:0000255" key="1">
    <source>
        <dbReference type="HAMAP-Rule" id="MF_00009"/>
    </source>
</evidence>
<proteinExistence type="inferred from homology"/>
<feature type="chain" id="PRO_0000102529" description="Endoribonuclease YbeY">
    <location>
        <begin position="1"/>
        <end position="155"/>
    </location>
</feature>
<feature type="binding site" evidence="1">
    <location>
        <position position="120"/>
    </location>
    <ligand>
        <name>Zn(2+)</name>
        <dbReference type="ChEBI" id="CHEBI:29105"/>
        <note>catalytic</note>
    </ligand>
</feature>
<feature type="binding site" evidence="1">
    <location>
        <position position="124"/>
    </location>
    <ligand>
        <name>Zn(2+)</name>
        <dbReference type="ChEBI" id="CHEBI:29105"/>
        <note>catalytic</note>
    </ligand>
</feature>
<feature type="binding site" evidence="1">
    <location>
        <position position="130"/>
    </location>
    <ligand>
        <name>Zn(2+)</name>
        <dbReference type="ChEBI" id="CHEBI:29105"/>
        <note>catalytic</note>
    </ligand>
</feature>
<dbReference type="EC" id="3.1.-.-" evidence="1"/>
<dbReference type="EMBL" id="BA000018">
    <property type="protein sequence ID" value="BAB42662.1"/>
    <property type="molecule type" value="Genomic_DNA"/>
</dbReference>
<dbReference type="PIR" id="A89938">
    <property type="entry name" value="A89938"/>
</dbReference>
<dbReference type="RefSeq" id="WP_000494134.1">
    <property type="nucleotide sequence ID" value="NC_002745.2"/>
</dbReference>
<dbReference type="SMR" id="P67137"/>
<dbReference type="EnsemblBacteria" id="BAB42662">
    <property type="protein sequence ID" value="BAB42662"/>
    <property type="gene ID" value="BAB42662"/>
</dbReference>
<dbReference type="KEGG" id="sau:SA1399"/>
<dbReference type="HOGENOM" id="CLU_106710_3_0_9"/>
<dbReference type="GO" id="GO:0005737">
    <property type="term" value="C:cytoplasm"/>
    <property type="evidence" value="ECO:0007669"/>
    <property type="project" value="UniProtKB-SubCell"/>
</dbReference>
<dbReference type="GO" id="GO:0004222">
    <property type="term" value="F:metalloendopeptidase activity"/>
    <property type="evidence" value="ECO:0007669"/>
    <property type="project" value="InterPro"/>
</dbReference>
<dbReference type="GO" id="GO:0004521">
    <property type="term" value="F:RNA endonuclease activity"/>
    <property type="evidence" value="ECO:0007669"/>
    <property type="project" value="UniProtKB-UniRule"/>
</dbReference>
<dbReference type="GO" id="GO:0008270">
    <property type="term" value="F:zinc ion binding"/>
    <property type="evidence" value="ECO:0007669"/>
    <property type="project" value="UniProtKB-UniRule"/>
</dbReference>
<dbReference type="GO" id="GO:0006364">
    <property type="term" value="P:rRNA processing"/>
    <property type="evidence" value="ECO:0007669"/>
    <property type="project" value="UniProtKB-UniRule"/>
</dbReference>
<dbReference type="Gene3D" id="3.40.390.30">
    <property type="entry name" value="Metalloproteases ('zincins'), catalytic domain"/>
    <property type="match status" value="1"/>
</dbReference>
<dbReference type="HAMAP" id="MF_00009">
    <property type="entry name" value="Endoribonucl_YbeY"/>
    <property type="match status" value="1"/>
</dbReference>
<dbReference type="InterPro" id="IPR023091">
    <property type="entry name" value="MetalPrtase_cat_dom_sf_prd"/>
</dbReference>
<dbReference type="InterPro" id="IPR002036">
    <property type="entry name" value="YbeY"/>
</dbReference>
<dbReference type="InterPro" id="IPR020549">
    <property type="entry name" value="YbeY_CS"/>
</dbReference>
<dbReference type="NCBIfam" id="TIGR00043">
    <property type="entry name" value="rRNA maturation RNase YbeY"/>
    <property type="match status" value="1"/>
</dbReference>
<dbReference type="PANTHER" id="PTHR46986">
    <property type="entry name" value="ENDORIBONUCLEASE YBEY, CHLOROPLASTIC"/>
    <property type="match status" value="1"/>
</dbReference>
<dbReference type="PANTHER" id="PTHR46986:SF1">
    <property type="entry name" value="ENDORIBONUCLEASE YBEY, CHLOROPLASTIC"/>
    <property type="match status" value="1"/>
</dbReference>
<dbReference type="Pfam" id="PF02130">
    <property type="entry name" value="YbeY"/>
    <property type="match status" value="1"/>
</dbReference>
<dbReference type="SUPFAM" id="SSF55486">
    <property type="entry name" value="Metalloproteases ('zincins'), catalytic domain"/>
    <property type="match status" value="1"/>
</dbReference>
<dbReference type="PROSITE" id="PS01306">
    <property type="entry name" value="UPF0054"/>
    <property type="match status" value="1"/>
</dbReference>
<protein>
    <recommendedName>
        <fullName evidence="1">Endoribonuclease YbeY</fullName>
        <ecNumber evidence="1">3.1.-.-</ecNumber>
    </recommendedName>
</protein>
<keyword id="KW-0963">Cytoplasm</keyword>
<keyword id="KW-0255">Endonuclease</keyword>
<keyword id="KW-0378">Hydrolase</keyword>
<keyword id="KW-0479">Metal-binding</keyword>
<keyword id="KW-0540">Nuclease</keyword>
<keyword id="KW-0690">Ribosome biogenesis</keyword>
<keyword id="KW-0698">rRNA processing</keyword>
<keyword id="KW-0862">Zinc</keyword>
<accession>P67137</accession>
<accession>Q99TS6</accession>
<gene>
    <name evidence="1" type="primary">ybeY</name>
    <name type="ordered locus">SA1399</name>
</gene>
<name>YBEY_STAAN</name>
<reference key="1">
    <citation type="journal article" date="2001" name="Lancet">
        <title>Whole genome sequencing of meticillin-resistant Staphylococcus aureus.</title>
        <authorList>
            <person name="Kuroda M."/>
            <person name="Ohta T."/>
            <person name="Uchiyama I."/>
            <person name="Baba T."/>
            <person name="Yuzawa H."/>
            <person name="Kobayashi I."/>
            <person name="Cui L."/>
            <person name="Oguchi A."/>
            <person name="Aoki K."/>
            <person name="Nagai Y."/>
            <person name="Lian J.-Q."/>
            <person name="Ito T."/>
            <person name="Kanamori M."/>
            <person name="Matsumaru H."/>
            <person name="Maruyama A."/>
            <person name="Murakami H."/>
            <person name="Hosoyama A."/>
            <person name="Mizutani-Ui Y."/>
            <person name="Takahashi N.K."/>
            <person name="Sawano T."/>
            <person name="Inoue R."/>
            <person name="Kaito C."/>
            <person name="Sekimizu K."/>
            <person name="Hirakawa H."/>
            <person name="Kuhara S."/>
            <person name="Goto S."/>
            <person name="Yabuzaki J."/>
            <person name="Kanehisa M."/>
            <person name="Yamashita A."/>
            <person name="Oshima K."/>
            <person name="Furuya K."/>
            <person name="Yoshino C."/>
            <person name="Shiba T."/>
            <person name="Hattori M."/>
            <person name="Ogasawara N."/>
            <person name="Hayashi H."/>
            <person name="Hiramatsu K."/>
        </authorList>
    </citation>
    <scope>NUCLEOTIDE SEQUENCE [LARGE SCALE GENOMIC DNA]</scope>
    <source>
        <strain>N315</strain>
    </source>
</reference>
<comment type="function">
    <text evidence="1">Single strand-specific metallo-endoribonuclease involved in late-stage 70S ribosome quality control and in maturation of the 3' terminus of the 16S rRNA.</text>
</comment>
<comment type="cofactor">
    <cofactor evidence="1">
        <name>Zn(2+)</name>
        <dbReference type="ChEBI" id="CHEBI:29105"/>
    </cofactor>
    <text evidence="1">Binds 1 zinc ion.</text>
</comment>
<comment type="subcellular location">
    <subcellularLocation>
        <location evidence="1">Cytoplasm</location>
    </subcellularLocation>
</comment>
<comment type="similarity">
    <text evidence="1">Belongs to the endoribonuclease YbeY family.</text>
</comment>
<organism>
    <name type="scientific">Staphylococcus aureus (strain N315)</name>
    <dbReference type="NCBI Taxonomy" id="158879"/>
    <lineage>
        <taxon>Bacteria</taxon>
        <taxon>Bacillati</taxon>
        <taxon>Bacillota</taxon>
        <taxon>Bacilli</taxon>
        <taxon>Bacillales</taxon>
        <taxon>Staphylococcaceae</taxon>
        <taxon>Staphylococcus</taxon>
    </lineage>
</organism>